<organism>
    <name type="scientific">Eryx miliaris nogaiorum</name>
    <name type="common">Black sand boa</name>
    <dbReference type="NCBI Taxonomy" id="51872"/>
    <lineage>
        <taxon>Eukaryota</taxon>
        <taxon>Metazoa</taxon>
        <taxon>Chordata</taxon>
        <taxon>Craniata</taxon>
        <taxon>Vertebrata</taxon>
        <taxon>Euteleostomi</taxon>
        <taxon>Lepidosauria</taxon>
        <taxon>Squamata</taxon>
        <taxon>Bifurcata</taxon>
        <taxon>Unidentata</taxon>
        <taxon>Episquamata</taxon>
        <taxon>Toxicofera</taxon>
        <taxon>Serpentes</taxon>
        <taxon>Henophidia</taxon>
        <taxon>Boidae</taxon>
        <taxon>Erycinae</taxon>
        <taxon>Eryx</taxon>
    </lineage>
</organism>
<sequence length="371" mass="42211">MPHQQMLILFGLLPVATNISTWWNFGSMLLACSSMQVLTGFFLAVHYTANINLAFSSIVHITRDVPYGWMMQNLHAIGASMFFICIYIHIARGLYYGSYLNKKTWLSGTTLLIMLMATAFFGYVLPWGQMSFWAATVITNLLTAIPYLGTTMTTWLWGGFAINDPTLTRFFALHFILPFGIISLSSLHIMLLHEDGSSNPLGTNSDIDKIPFHPYHTYKDLLMLSLMVLMLLMTVSFLPDIFNDPENFSKANPLVTPQHIKPEWYFLFAYGILRSIPNKLWGALALAMSITILLTVPFTHTSTIRSMMFRPIMQLMFWTLVATFMVITWAATKPVEPPFTMISQIASTIYFLFLIMNPIAGWIENNILKYN</sequence>
<proteinExistence type="inferred from homology"/>
<gene>
    <name type="primary">MT-CYB</name>
    <name type="synonym">COB</name>
    <name type="synonym">CYTB</name>
    <name type="synonym">MTCYB</name>
</gene>
<name>CYB_ERYMN</name>
<keyword id="KW-0249">Electron transport</keyword>
<keyword id="KW-0349">Heme</keyword>
<keyword id="KW-0408">Iron</keyword>
<keyword id="KW-0472">Membrane</keyword>
<keyword id="KW-0479">Metal-binding</keyword>
<keyword id="KW-0496">Mitochondrion</keyword>
<keyword id="KW-0999">Mitochondrion inner membrane</keyword>
<keyword id="KW-0679">Respiratory chain</keyword>
<keyword id="KW-0812">Transmembrane</keyword>
<keyword id="KW-1133">Transmembrane helix</keyword>
<keyword id="KW-0813">Transport</keyword>
<keyword id="KW-0830">Ubiquinone</keyword>
<dbReference type="EMBL" id="U69825">
    <property type="protein sequence ID" value="AAC01842.1"/>
    <property type="molecule type" value="Genomic_DNA"/>
</dbReference>
<dbReference type="EMBL" id="U69826">
    <property type="protein sequence ID" value="AAC01843.1"/>
    <property type="molecule type" value="Genomic_DNA"/>
</dbReference>
<dbReference type="SMR" id="O48080"/>
<dbReference type="GO" id="GO:0005743">
    <property type="term" value="C:mitochondrial inner membrane"/>
    <property type="evidence" value="ECO:0007669"/>
    <property type="project" value="UniProtKB-SubCell"/>
</dbReference>
<dbReference type="GO" id="GO:0045275">
    <property type="term" value="C:respiratory chain complex III"/>
    <property type="evidence" value="ECO:0007669"/>
    <property type="project" value="InterPro"/>
</dbReference>
<dbReference type="GO" id="GO:0046872">
    <property type="term" value="F:metal ion binding"/>
    <property type="evidence" value="ECO:0007669"/>
    <property type="project" value="UniProtKB-KW"/>
</dbReference>
<dbReference type="GO" id="GO:0008121">
    <property type="term" value="F:ubiquinol-cytochrome-c reductase activity"/>
    <property type="evidence" value="ECO:0007669"/>
    <property type="project" value="InterPro"/>
</dbReference>
<dbReference type="GO" id="GO:0006122">
    <property type="term" value="P:mitochondrial electron transport, ubiquinol to cytochrome c"/>
    <property type="evidence" value="ECO:0007669"/>
    <property type="project" value="TreeGrafter"/>
</dbReference>
<dbReference type="CDD" id="cd00290">
    <property type="entry name" value="cytochrome_b_C"/>
    <property type="match status" value="1"/>
</dbReference>
<dbReference type="CDD" id="cd00284">
    <property type="entry name" value="Cytochrome_b_N"/>
    <property type="match status" value="1"/>
</dbReference>
<dbReference type="Gene3D" id="1.20.810.10">
    <property type="entry name" value="Cytochrome Bc1 Complex, Chain C"/>
    <property type="match status" value="1"/>
</dbReference>
<dbReference type="InterPro" id="IPR005798">
    <property type="entry name" value="Cyt_b/b6_C"/>
</dbReference>
<dbReference type="InterPro" id="IPR036150">
    <property type="entry name" value="Cyt_b/b6_C_sf"/>
</dbReference>
<dbReference type="InterPro" id="IPR005797">
    <property type="entry name" value="Cyt_b/b6_N"/>
</dbReference>
<dbReference type="InterPro" id="IPR027387">
    <property type="entry name" value="Cytb/b6-like_sf"/>
</dbReference>
<dbReference type="InterPro" id="IPR030689">
    <property type="entry name" value="Cytochrome_b"/>
</dbReference>
<dbReference type="InterPro" id="IPR048260">
    <property type="entry name" value="Cytochrome_b_C_euk/bac"/>
</dbReference>
<dbReference type="InterPro" id="IPR048259">
    <property type="entry name" value="Cytochrome_b_N_euk/bac"/>
</dbReference>
<dbReference type="InterPro" id="IPR016174">
    <property type="entry name" value="Di-haem_cyt_TM"/>
</dbReference>
<dbReference type="PANTHER" id="PTHR19271">
    <property type="entry name" value="CYTOCHROME B"/>
    <property type="match status" value="1"/>
</dbReference>
<dbReference type="PANTHER" id="PTHR19271:SF16">
    <property type="entry name" value="CYTOCHROME B"/>
    <property type="match status" value="1"/>
</dbReference>
<dbReference type="Pfam" id="PF00032">
    <property type="entry name" value="Cytochrom_B_C"/>
    <property type="match status" value="1"/>
</dbReference>
<dbReference type="Pfam" id="PF00033">
    <property type="entry name" value="Cytochrome_B"/>
    <property type="match status" value="1"/>
</dbReference>
<dbReference type="PIRSF" id="PIRSF038885">
    <property type="entry name" value="COB"/>
    <property type="match status" value="1"/>
</dbReference>
<dbReference type="SUPFAM" id="SSF81648">
    <property type="entry name" value="a domain/subunit of cytochrome bc1 complex (Ubiquinol-cytochrome c reductase)"/>
    <property type="match status" value="1"/>
</dbReference>
<dbReference type="SUPFAM" id="SSF81342">
    <property type="entry name" value="Transmembrane di-heme cytochromes"/>
    <property type="match status" value="1"/>
</dbReference>
<dbReference type="PROSITE" id="PS51003">
    <property type="entry name" value="CYTB_CTER"/>
    <property type="match status" value="1"/>
</dbReference>
<dbReference type="PROSITE" id="PS51002">
    <property type="entry name" value="CYTB_NTER"/>
    <property type="match status" value="1"/>
</dbReference>
<evidence type="ECO:0000250" key="1"/>
<evidence type="ECO:0000250" key="2">
    <source>
        <dbReference type="UniProtKB" id="P00157"/>
    </source>
</evidence>
<evidence type="ECO:0000255" key="3">
    <source>
        <dbReference type="PROSITE-ProRule" id="PRU00967"/>
    </source>
</evidence>
<evidence type="ECO:0000255" key="4">
    <source>
        <dbReference type="PROSITE-ProRule" id="PRU00968"/>
    </source>
</evidence>
<comment type="function">
    <text evidence="2">Component of the ubiquinol-cytochrome c reductase complex (complex III or cytochrome b-c1 complex) that is part of the mitochondrial respiratory chain. The b-c1 complex mediates electron transfer from ubiquinol to cytochrome c. Contributes to the generation of a proton gradient across the mitochondrial membrane that is then used for ATP synthesis.</text>
</comment>
<comment type="cofactor">
    <cofactor evidence="2">
        <name>heme b</name>
        <dbReference type="ChEBI" id="CHEBI:60344"/>
    </cofactor>
    <text evidence="2">Binds 2 heme b groups non-covalently.</text>
</comment>
<comment type="subunit">
    <text evidence="2">The cytochrome bc1 complex contains 3 respiratory subunits (MT-CYB, CYC1 and UQCRFS1), 2 core proteins (UQCRC1 and UQCRC2) and probably 6 low-molecular weight proteins.</text>
</comment>
<comment type="subcellular location">
    <subcellularLocation>
        <location evidence="2">Mitochondrion inner membrane</location>
        <topology evidence="2">Multi-pass membrane protein</topology>
    </subcellularLocation>
</comment>
<comment type="miscellaneous">
    <text evidence="1">Heme 1 (or BL or b562) is low-potential and absorbs at about 562 nm, and heme 2 (or BH or b566) is high-potential and absorbs at about 566 nm.</text>
</comment>
<comment type="similarity">
    <text evidence="3 4">Belongs to the cytochrome b family.</text>
</comment>
<comment type="caution">
    <text evidence="2">The full-length protein contains only eight transmembrane helices, not nine as predicted by bioinformatics tools.</text>
</comment>
<protein>
    <recommendedName>
        <fullName>Cytochrome b</fullName>
    </recommendedName>
    <alternativeName>
        <fullName>Complex III subunit 3</fullName>
    </alternativeName>
    <alternativeName>
        <fullName>Complex III subunit III</fullName>
    </alternativeName>
    <alternativeName>
        <fullName>Cytochrome b-c1 complex subunit 3</fullName>
    </alternativeName>
    <alternativeName>
        <fullName>Ubiquinol-cytochrome-c reductase complex cytochrome b subunit</fullName>
    </alternativeName>
</protein>
<geneLocation type="mitochondrion"/>
<accession>O48080</accession>
<accession>O48081</accession>
<reference key="1">
    <citation type="thesis" date="1997" institute="Queen's University / Kingston" country="Canada">
        <title>Hic Sunt Serpentes -- molecular phylogenetics and the Boidae (Serpentes: Booidea).</title>
        <authorList>
            <person name="Campbell B.N."/>
        </authorList>
    </citation>
    <scope>NUCLEOTIDE SEQUENCE [GENOMIC DNA]</scope>
</reference>
<feature type="chain" id="PRO_0000060947" description="Cytochrome b">
    <location>
        <begin position="1"/>
        <end position="371"/>
    </location>
</feature>
<feature type="transmembrane region" description="Helical" evidence="2">
    <location>
        <begin position="25"/>
        <end position="45"/>
    </location>
</feature>
<feature type="transmembrane region" description="Helical" evidence="2">
    <location>
        <begin position="69"/>
        <end position="90"/>
    </location>
</feature>
<feature type="transmembrane region" description="Helical" evidence="2">
    <location>
        <begin position="105"/>
        <end position="125"/>
    </location>
</feature>
<feature type="transmembrane region" description="Helical" evidence="2">
    <location>
        <begin position="170"/>
        <end position="190"/>
    </location>
</feature>
<feature type="transmembrane region" description="Helical" evidence="2">
    <location>
        <begin position="218"/>
        <end position="238"/>
    </location>
</feature>
<feature type="transmembrane region" description="Helical" evidence="2">
    <location>
        <begin position="280"/>
        <end position="300"/>
    </location>
</feature>
<feature type="transmembrane region" description="Helical" evidence="2">
    <location>
        <begin position="312"/>
        <end position="332"/>
    </location>
</feature>
<feature type="transmembrane region" description="Helical" evidence="2">
    <location>
        <begin position="339"/>
        <end position="358"/>
    </location>
</feature>
<feature type="binding site" description="axial binding residue" evidence="2">
    <location>
        <position position="75"/>
    </location>
    <ligand>
        <name>heme b</name>
        <dbReference type="ChEBI" id="CHEBI:60344"/>
        <label>b562</label>
    </ligand>
    <ligandPart>
        <name>Fe</name>
        <dbReference type="ChEBI" id="CHEBI:18248"/>
    </ligandPart>
</feature>
<feature type="binding site" description="axial binding residue" evidence="2">
    <location>
        <position position="89"/>
    </location>
    <ligand>
        <name>heme b</name>
        <dbReference type="ChEBI" id="CHEBI:60344"/>
        <label>b566</label>
    </ligand>
    <ligandPart>
        <name>Fe</name>
        <dbReference type="ChEBI" id="CHEBI:18248"/>
    </ligandPart>
</feature>
<feature type="binding site" description="axial binding residue" evidence="2">
    <location>
        <position position="174"/>
    </location>
    <ligand>
        <name>heme b</name>
        <dbReference type="ChEBI" id="CHEBI:60344"/>
        <label>b562</label>
    </ligand>
    <ligandPart>
        <name>Fe</name>
        <dbReference type="ChEBI" id="CHEBI:18248"/>
    </ligandPart>
</feature>
<feature type="binding site" description="axial binding residue" evidence="2">
    <location>
        <position position="188"/>
    </location>
    <ligand>
        <name>heme b</name>
        <dbReference type="ChEBI" id="CHEBI:60344"/>
        <label>b566</label>
    </ligand>
    <ligandPart>
        <name>Fe</name>
        <dbReference type="ChEBI" id="CHEBI:18248"/>
    </ligandPart>
</feature>
<feature type="binding site" evidence="2">
    <location>
        <position position="193"/>
    </location>
    <ligand>
        <name>a ubiquinone</name>
        <dbReference type="ChEBI" id="CHEBI:16389"/>
    </ligand>
</feature>
<feature type="sequence variant">
    <original>N</original>
    <variation>D</variation>
    <location>
        <position position="73"/>
    </location>
</feature>
<feature type="sequence variant">
    <original>T</original>
    <variation>M</variation>
    <location>
        <position position="234"/>
    </location>
</feature>
<feature type="sequence variant">
    <original>W</original>
    <variation>G</variation>
    <location>
        <position position="281"/>
    </location>
</feature>
<feature type="sequence variant">
    <original>T</original>
    <variation>M</variation>
    <location>
        <position position="291"/>
    </location>
</feature>
<feature type="sequence variant">
    <original>L</original>
    <variation>M</variation>
    <location>
        <position position="368"/>
    </location>
</feature>